<reference key="1">
    <citation type="journal article" date="2006" name="BMC Genomics">
        <title>Complete genome sequence of Shigella flexneri 5b and comparison with Shigella flexneri 2a.</title>
        <authorList>
            <person name="Nie H."/>
            <person name="Yang F."/>
            <person name="Zhang X."/>
            <person name="Yang J."/>
            <person name="Chen L."/>
            <person name="Wang J."/>
            <person name="Xiong Z."/>
            <person name="Peng J."/>
            <person name="Sun L."/>
            <person name="Dong J."/>
            <person name="Xue Y."/>
            <person name="Xu X."/>
            <person name="Chen S."/>
            <person name="Yao Z."/>
            <person name="Shen Y."/>
            <person name="Jin Q."/>
        </authorList>
    </citation>
    <scope>NUCLEOTIDE SEQUENCE [LARGE SCALE GENOMIC DNA]</scope>
    <source>
        <strain>8401</strain>
    </source>
</reference>
<accession>Q0T773</accession>
<gene>
    <name evidence="1" type="primary">folD</name>
    <name type="ordered locus">SFV_0487</name>
</gene>
<evidence type="ECO:0000255" key="1">
    <source>
        <dbReference type="HAMAP-Rule" id="MF_01576"/>
    </source>
</evidence>
<evidence type="ECO:0000305" key="2"/>
<protein>
    <recommendedName>
        <fullName evidence="1">Bifunctional protein FolD</fullName>
    </recommendedName>
    <domain>
        <recommendedName>
            <fullName evidence="1">Methylenetetrahydrofolate dehydrogenase</fullName>
            <ecNumber evidence="1">1.5.1.5</ecNumber>
        </recommendedName>
    </domain>
    <domain>
        <recommendedName>
            <fullName evidence="1">Methenyltetrahydrofolate cyclohydrolase</fullName>
            <ecNumber evidence="1">3.5.4.9</ecNumber>
        </recommendedName>
    </domain>
</protein>
<sequence length="288" mass="30956">MAAKIIDGKTIAQQVRSEVAQKVQARIAAGLRAPGLAVVLVGSNPASQIYVASKRKACEEVGFVSRSYDLPETTSEAELLELIDALNADNTIDGILVQLPLPAGIDNVKVLERIHPDKDVDGFHPYNVGRLCQRAPRLRPCTPRGIVTLLERYNIDTFGLNAVVIGASNIVGRPMSMELLLAGCTTTVTHRFTKNLRHHVENADLLIVAVGKPGFIPGDWIKEGAIVIDVGINRLENGKVVGDVVFEDAAKRASYITPVPGGVGPMTVATLIENTLQACVEYHDPQGE</sequence>
<comment type="function">
    <text evidence="1">Catalyzes the oxidation of 5,10-methylenetetrahydrofolate to 5,10-methenyltetrahydrofolate and then the hydrolysis of 5,10-methenyltetrahydrofolate to 10-formyltetrahydrofolate.</text>
</comment>
<comment type="catalytic activity">
    <reaction evidence="1">
        <text>(6R)-5,10-methylene-5,6,7,8-tetrahydrofolate + NADP(+) = (6R)-5,10-methenyltetrahydrofolate + NADPH</text>
        <dbReference type="Rhea" id="RHEA:22812"/>
        <dbReference type="ChEBI" id="CHEBI:15636"/>
        <dbReference type="ChEBI" id="CHEBI:57455"/>
        <dbReference type="ChEBI" id="CHEBI:57783"/>
        <dbReference type="ChEBI" id="CHEBI:58349"/>
        <dbReference type="EC" id="1.5.1.5"/>
    </reaction>
</comment>
<comment type="catalytic activity">
    <reaction evidence="1">
        <text>(6R)-5,10-methenyltetrahydrofolate + H2O = (6R)-10-formyltetrahydrofolate + H(+)</text>
        <dbReference type="Rhea" id="RHEA:23700"/>
        <dbReference type="ChEBI" id="CHEBI:15377"/>
        <dbReference type="ChEBI" id="CHEBI:15378"/>
        <dbReference type="ChEBI" id="CHEBI:57455"/>
        <dbReference type="ChEBI" id="CHEBI:195366"/>
        <dbReference type="EC" id="3.5.4.9"/>
    </reaction>
</comment>
<comment type="pathway">
    <text evidence="1">One-carbon metabolism; tetrahydrofolate interconversion.</text>
</comment>
<comment type="subunit">
    <text evidence="1">Homodimer.</text>
</comment>
<comment type="similarity">
    <text evidence="1">Belongs to the tetrahydrofolate dehydrogenase/cyclohydrolase family.</text>
</comment>
<comment type="sequence caution" evidence="2">
    <conflict type="erroneous initiation">
        <sequence resource="EMBL-CDS" id="ABF02753"/>
    </conflict>
</comment>
<dbReference type="EC" id="1.5.1.5" evidence="1"/>
<dbReference type="EC" id="3.5.4.9" evidence="1"/>
<dbReference type="EMBL" id="CP000266">
    <property type="protein sequence ID" value="ABF02753.1"/>
    <property type="status" value="ALT_INIT"/>
    <property type="molecule type" value="Genomic_DNA"/>
</dbReference>
<dbReference type="RefSeq" id="WP_000729155.1">
    <property type="nucleotide sequence ID" value="NC_008258.1"/>
</dbReference>
<dbReference type="SMR" id="Q0T773"/>
<dbReference type="GeneID" id="93776949"/>
<dbReference type="KEGG" id="sfv:SFV_0487"/>
<dbReference type="HOGENOM" id="CLU_034045_2_1_6"/>
<dbReference type="UniPathway" id="UPA00193"/>
<dbReference type="Proteomes" id="UP000000659">
    <property type="component" value="Chromosome"/>
</dbReference>
<dbReference type="GO" id="GO:0005829">
    <property type="term" value="C:cytosol"/>
    <property type="evidence" value="ECO:0007669"/>
    <property type="project" value="TreeGrafter"/>
</dbReference>
<dbReference type="GO" id="GO:0004477">
    <property type="term" value="F:methenyltetrahydrofolate cyclohydrolase activity"/>
    <property type="evidence" value="ECO:0007669"/>
    <property type="project" value="UniProtKB-UniRule"/>
</dbReference>
<dbReference type="GO" id="GO:0004488">
    <property type="term" value="F:methylenetetrahydrofolate dehydrogenase (NADP+) activity"/>
    <property type="evidence" value="ECO:0007669"/>
    <property type="project" value="UniProtKB-UniRule"/>
</dbReference>
<dbReference type="GO" id="GO:0000105">
    <property type="term" value="P:L-histidine biosynthetic process"/>
    <property type="evidence" value="ECO:0007669"/>
    <property type="project" value="UniProtKB-KW"/>
</dbReference>
<dbReference type="GO" id="GO:0009086">
    <property type="term" value="P:methionine biosynthetic process"/>
    <property type="evidence" value="ECO:0007669"/>
    <property type="project" value="UniProtKB-KW"/>
</dbReference>
<dbReference type="GO" id="GO:0006164">
    <property type="term" value="P:purine nucleotide biosynthetic process"/>
    <property type="evidence" value="ECO:0007669"/>
    <property type="project" value="UniProtKB-KW"/>
</dbReference>
<dbReference type="GO" id="GO:0035999">
    <property type="term" value="P:tetrahydrofolate interconversion"/>
    <property type="evidence" value="ECO:0007669"/>
    <property type="project" value="UniProtKB-UniRule"/>
</dbReference>
<dbReference type="CDD" id="cd01080">
    <property type="entry name" value="NAD_bind_m-THF_DH_Cyclohyd"/>
    <property type="match status" value="1"/>
</dbReference>
<dbReference type="FunFam" id="3.40.50.10860:FF:000001">
    <property type="entry name" value="Bifunctional protein FolD"/>
    <property type="match status" value="1"/>
</dbReference>
<dbReference type="FunFam" id="3.40.50.720:FF:000006">
    <property type="entry name" value="Bifunctional protein FolD"/>
    <property type="match status" value="1"/>
</dbReference>
<dbReference type="Gene3D" id="3.40.50.10860">
    <property type="entry name" value="Leucine Dehydrogenase, chain A, domain 1"/>
    <property type="match status" value="1"/>
</dbReference>
<dbReference type="Gene3D" id="3.40.50.720">
    <property type="entry name" value="NAD(P)-binding Rossmann-like Domain"/>
    <property type="match status" value="1"/>
</dbReference>
<dbReference type="HAMAP" id="MF_01576">
    <property type="entry name" value="THF_DHG_CYH"/>
    <property type="match status" value="1"/>
</dbReference>
<dbReference type="InterPro" id="IPR046346">
    <property type="entry name" value="Aminoacid_DH-like_N_sf"/>
</dbReference>
<dbReference type="InterPro" id="IPR036291">
    <property type="entry name" value="NAD(P)-bd_dom_sf"/>
</dbReference>
<dbReference type="InterPro" id="IPR000672">
    <property type="entry name" value="THF_DH/CycHdrlase"/>
</dbReference>
<dbReference type="InterPro" id="IPR020630">
    <property type="entry name" value="THF_DH/CycHdrlase_cat_dom"/>
</dbReference>
<dbReference type="InterPro" id="IPR020867">
    <property type="entry name" value="THF_DH/CycHdrlase_CS"/>
</dbReference>
<dbReference type="InterPro" id="IPR020631">
    <property type="entry name" value="THF_DH/CycHdrlase_NAD-bd_dom"/>
</dbReference>
<dbReference type="NCBIfam" id="NF008058">
    <property type="entry name" value="PRK10792.1"/>
    <property type="match status" value="1"/>
</dbReference>
<dbReference type="NCBIfam" id="NF010783">
    <property type="entry name" value="PRK14186.1"/>
    <property type="match status" value="1"/>
</dbReference>
<dbReference type="PANTHER" id="PTHR48099:SF5">
    <property type="entry name" value="C-1-TETRAHYDROFOLATE SYNTHASE, CYTOPLASMIC"/>
    <property type="match status" value="1"/>
</dbReference>
<dbReference type="PANTHER" id="PTHR48099">
    <property type="entry name" value="C-1-TETRAHYDROFOLATE SYNTHASE, CYTOPLASMIC-RELATED"/>
    <property type="match status" value="1"/>
</dbReference>
<dbReference type="Pfam" id="PF00763">
    <property type="entry name" value="THF_DHG_CYH"/>
    <property type="match status" value="1"/>
</dbReference>
<dbReference type="Pfam" id="PF02882">
    <property type="entry name" value="THF_DHG_CYH_C"/>
    <property type="match status" value="1"/>
</dbReference>
<dbReference type="PRINTS" id="PR00085">
    <property type="entry name" value="THFDHDRGNASE"/>
</dbReference>
<dbReference type="SUPFAM" id="SSF53223">
    <property type="entry name" value="Aminoacid dehydrogenase-like, N-terminal domain"/>
    <property type="match status" value="1"/>
</dbReference>
<dbReference type="SUPFAM" id="SSF51735">
    <property type="entry name" value="NAD(P)-binding Rossmann-fold domains"/>
    <property type="match status" value="1"/>
</dbReference>
<dbReference type="PROSITE" id="PS00766">
    <property type="entry name" value="THF_DHG_CYH_1"/>
    <property type="match status" value="1"/>
</dbReference>
<dbReference type="PROSITE" id="PS00767">
    <property type="entry name" value="THF_DHG_CYH_2"/>
    <property type="match status" value="1"/>
</dbReference>
<proteinExistence type="inferred from homology"/>
<name>FOLD_SHIF8</name>
<organism>
    <name type="scientific">Shigella flexneri serotype 5b (strain 8401)</name>
    <dbReference type="NCBI Taxonomy" id="373384"/>
    <lineage>
        <taxon>Bacteria</taxon>
        <taxon>Pseudomonadati</taxon>
        <taxon>Pseudomonadota</taxon>
        <taxon>Gammaproteobacteria</taxon>
        <taxon>Enterobacterales</taxon>
        <taxon>Enterobacteriaceae</taxon>
        <taxon>Shigella</taxon>
    </lineage>
</organism>
<keyword id="KW-0028">Amino-acid biosynthesis</keyword>
<keyword id="KW-0368">Histidine biosynthesis</keyword>
<keyword id="KW-0378">Hydrolase</keyword>
<keyword id="KW-0486">Methionine biosynthesis</keyword>
<keyword id="KW-0511">Multifunctional enzyme</keyword>
<keyword id="KW-0521">NADP</keyword>
<keyword id="KW-0554">One-carbon metabolism</keyword>
<keyword id="KW-0560">Oxidoreductase</keyword>
<keyword id="KW-0658">Purine biosynthesis</keyword>
<feature type="chain" id="PRO_0000305880" description="Bifunctional protein FolD">
    <location>
        <begin position="1"/>
        <end position="288"/>
    </location>
</feature>
<feature type="binding site" evidence="1">
    <location>
        <begin position="166"/>
        <end position="168"/>
    </location>
    <ligand>
        <name>NADP(+)</name>
        <dbReference type="ChEBI" id="CHEBI:58349"/>
    </ligand>
</feature>
<feature type="binding site" evidence="1">
    <location>
        <position position="232"/>
    </location>
    <ligand>
        <name>NADP(+)</name>
        <dbReference type="ChEBI" id="CHEBI:58349"/>
    </ligand>
</feature>